<proteinExistence type="inferred from homology"/>
<feature type="chain" id="PRO_1000140044" description="Multifunctional CCA protein">
    <location>
        <begin position="1"/>
        <end position="410"/>
    </location>
</feature>
<feature type="domain" description="HD" evidence="1">
    <location>
        <begin position="228"/>
        <end position="329"/>
    </location>
</feature>
<feature type="binding site" evidence="1">
    <location>
        <position position="8"/>
    </location>
    <ligand>
        <name>ATP</name>
        <dbReference type="ChEBI" id="CHEBI:30616"/>
    </ligand>
</feature>
<feature type="binding site" evidence="1">
    <location>
        <position position="8"/>
    </location>
    <ligand>
        <name>CTP</name>
        <dbReference type="ChEBI" id="CHEBI:37563"/>
    </ligand>
</feature>
<feature type="binding site" evidence="1">
    <location>
        <position position="11"/>
    </location>
    <ligand>
        <name>ATP</name>
        <dbReference type="ChEBI" id="CHEBI:30616"/>
    </ligand>
</feature>
<feature type="binding site" evidence="1">
    <location>
        <position position="11"/>
    </location>
    <ligand>
        <name>CTP</name>
        <dbReference type="ChEBI" id="CHEBI:37563"/>
    </ligand>
</feature>
<feature type="binding site" evidence="1">
    <location>
        <position position="21"/>
    </location>
    <ligand>
        <name>Mg(2+)</name>
        <dbReference type="ChEBI" id="CHEBI:18420"/>
    </ligand>
</feature>
<feature type="binding site" evidence="1">
    <location>
        <position position="23"/>
    </location>
    <ligand>
        <name>Mg(2+)</name>
        <dbReference type="ChEBI" id="CHEBI:18420"/>
    </ligand>
</feature>
<feature type="binding site" evidence="1">
    <location>
        <position position="91"/>
    </location>
    <ligand>
        <name>ATP</name>
        <dbReference type="ChEBI" id="CHEBI:30616"/>
    </ligand>
</feature>
<feature type="binding site" evidence="1">
    <location>
        <position position="91"/>
    </location>
    <ligand>
        <name>CTP</name>
        <dbReference type="ChEBI" id="CHEBI:37563"/>
    </ligand>
</feature>
<feature type="binding site" evidence="1">
    <location>
        <position position="137"/>
    </location>
    <ligand>
        <name>ATP</name>
        <dbReference type="ChEBI" id="CHEBI:30616"/>
    </ligand>
</feature>
<feature type="binding site" evidence="1">
    <location>
        <position position="137"/>
    </location>
    <ligand>
        <name>CTP</name>
        <dbReference type="ChEBI" id="CHEBI:37563"/>
    </ligand>
</feature>
<feature type="binding site" evidence="1">
    <location>
        <position position="140"/>
    </location>
    <ligand>
        <name>ATP</name>
        <dbReference type="ChEBI" id="CHEBI:30616"/>
    </ligand>
</feature>
<feature type="binding site" evidence="1">
    <location>
        <position position="140"/>
    </location>
    <ligand>
        <name>CTP</name>
        <dbReference type="ChEBI" id="CHEBI:37563"/>
    </ligand>
</feature>
<gene>
    <name evidence="1" type="primary">cca</name>
    <name type="ordered locus">PLES_05811</name>
</gene>
<reference key="1">
    <citation type="journal article" date="2009" name="Genome Res.">
        <title>Newly introduced genomic prophage islands are critical determinants of in vivo competitiveness in the Liverpool epidemic strain of Pseudomonas aeruginosa.</title>
        <authorList>
            <person name="Winstanley C."/>
            <person name="Langille M.G.I."/>
            <person name="Fothergill J.L."/>
            <person name="Kukavica-Ibrulj I."/>
            <person name="Paradis-Bleau C."/>
            <person name="Sanschagrin F."/>
            <person name="Thomson N.R."/>
            <person name="Winsor G.L."/>
            <person name="Quail M.A."/>
            <person name="Lennard N."/>
            <person name="Bignell A."/>
            <person name="Clarke L."/>
            <person name="Seeger K."/>
            <person name="Saunders D."/>
            <person name="Harris D."/>
            <person name="Parkhill J."/>
            <person name="Hancock R.E.W."/>
            <person name="Brinkman F.S.L."/>
            <person name="Levesque R.C."/>
        </authorList>
    </citation>
    <scope>NUCLEOTIDE SEQUENCE [LARGE SCALE GENOMIC DNA]</scope>
    <source>
        <strain>LESB58</strain>
    </source>
</reference>
<evidence type="ECO:0000255" key="1">
    <source>
        <dbReference type="HAMAP-Rule" id="MF_01261"/>
    </source>
</evidence>
<comment type="function">
    <text evidence="1">Catalyzes the addition and repair of the essential 3'-terminal CCA sequence in tRNAs without using a nucleic acid template. Adds these three nucleotides in the order of C, C, and A to the tRNA nucleotide-73, using CTP and ATP as substrates and producing inorganic pyrophosphate. tRNA 3'-terminal CCA addition is required both for tRNA processing and repair. Also involved in tRNA surveillance by mediating tandem CCA addition to generate a CCACCA at the 3' terminus of unstable tRNAs. While stable tRNAs receive only 3'-terminal CCA, unstable tRNAs are marked with CCACCA and rapidly degraded.</text>
</comment>
<comment type="catalytic activity">
    <reaction evidence="1">
        <text>a tRNA precursor + 2 CTP + ATP = a tRNA with a 3' CCA end + 3 diphosphate</text>
        <dbReference type="Rhea" id="RHEA:14433"/>
        <dbReference type="Rhea" id="RHEA-COMP:10465"/>
        <dbReference type="Rhea" id="RHEA-COMP:10468"/>
        <dbReference type="ChEBI" id="CHEBI:30616"/>
        <dbReference type="ChEBI" id="CHEBI:33019"/>
        <dbReference type="ChEBI" id="CHEBI:37563"/>
        <dbReference type="ChEBI" id="CHEBI:74896"/>
        <dbReference type="ChEBI" id="CHEBI:83071"/>
        <dbReference type="EC" id="2.7.7.72"/>
    </reaction>
</comment>
<comment type="catalytic activity">
    <reaction evidence="1">
        <text>a tRNA with a 3' CCA end + 2 CTP + ATP = a tRNA with a 3' CCACCA end + 3 diphosphate</text>
        <dbReference type="Rhea" id="RHEA:76235"/>
        <dbReference type="Rhea" id="RHEA-COMP:10468"/>
        <dbReference type="Rhea" id="RHEA-COMP:18655"/>
        <dbReference type="ChEBI" id="CHEBI:30616"/>
        <dbReference type="ChEBI" id="CHEBI:33019"/>
        <dbReference type="ChEBI" id="CHEBI:37563"/>
        <dbReference type="ChEBI" id="CHEBI:83071"/>
        <dbReference type="ChEBI" id="CHEBI:195187"/>
    </reaction>
    <physiologicalReaction direction="left-to-right" evidence="1">
        <dbReference type="Rhea" id="RHEA:76236"/>
    </physiologicalReaction>
</comment>
<comment type="cofactor">
    <cofactor evidence="1">
        <name>Mg(2+)</name>
        <dbReference type="ChEBI" id="CHEBI:18420"/>
    </cofactor>
    <text evidence="1">Magnesium is required for nucleotidyltransferase activity.</text>
</comment>
<comment type="cofactor">
    <cofactor evidence="1">
        <name>Ni(2+)</name>
        <dbReference type="ChEBI" id="CHEBI:49786"/>
    </cofactor>
    <text evidence="1">Nickel for phosphatase activity.</text>
</comment>
<comment type="subunit">
    <text evidence="1">Monomer. Can also form homodimers and oligomers.</text>
</comment>
<comment type="domain">
    <text evidence="1">Comprises two domains: an N-terminal domain containing the nucleotidyltransferase activity and a C-terminal HD domain associated with both phosphodiesterase and phosphatase activities.</text>
</comment>
<comment type="miscellaneous">
    <text evidence="1">A single active site specifically recognizes both ATP and CTP and is responsible for their addition.</text>
</comment>
<comment type="similarity">
    <text evidence="1">Belongs to the tRNA nucleotidyltransferase/poly(A) polymerase family. Bacterial CCA-adding enzyme type 1 subfamily.</text>
</comment>
<keyword id="KW-0067">ATP-binding</keyword>
<keyword id="KW-0378">Hydrolase</keyword>
<keyword id="KW-0460">Magnesium</keyword>
<keyword id="KW-0479">Metal-binding</keyword>
<keyword id="KW-0511">Multifunctional enzyme</keyword>
<keyword id="KW-0533">Nickel</keyword>
<keyword id="KW-0547">Nucleotide-binding</keyword>
<keyword id="KW-0548">Nucleotidyltransferase</keyword>
<keyword id="KW-0692">RNA repair</keyword>
<keyword id="KW-0694">RNA-binding</keyword>
<keyword id="KW-0808">Transferase</keyword>
<keyword id="KW-0819">tRNA processing</keyword>
<name>CCA_PSEA8</name>
<accession>B7V4H0</accession>
<sequence>MQIYKVGGAVRDRLLGRPVTDIDWVVVGASSDEMLARGYRPVGADFPVFLHPQSGEEYALARTERKSGRGYGGFTFHASPEVTLEEDLTRRDLTINAMAEDEQGRVIDPYGGQADLEARLLRHVSPAFAEDPLRVLRVARFAARYAGLGFRVAAETLALMRQLAESGELQALTPERSWKEISRALMEPNPEVFIQVLHDCGALAELIPEVEALFGVPQPAAHHPEIDTGVHVLSVLQQCARHRQPLSVRWACLLHDLGKGLTSEADWPRHIAHETRGVPLIDAVNQRFRVPRDCQELARLVGEYHTHAHRALELRPNTLLELLQSFDVYRRPQRFEEFVAASEMDARGRLGLEQRDYPQAAYLLGAAQAARAVSVKPLVEKGLKGAELGEALKCARLAALKAYKEERGKA</sequence>
<organism>
    <name type="scientific">Pseudomonas aeruginosa (strain LESB58)</name>
    <dbReference type="NCBI Taxonomy" id="557722"/>
    <lineage>
        <taxon>Bacteria</taxon>
        <taxon>Pseudomonadati</taxon>
        <taxon>Pseudomonadota</taxon>
        <taxon>Gammaproteobacteria</taxon>
        <taxon>Pseudomonadales</taxon>
        <taxon>Pseudomonadaceae</taxon>
        <taxon>Pseudomonas</taxon>
    </lineage>
</organism>
<protein>
    <recommendedName>
        <fullName evidence="1">Multifunctional CCA protein</fullName>
    </recommendedName>
    <domain>
        <recommendedName>
            <fullName evidence="1">CCA-adding enzyme</fullName>
            <ecNumber evidence="1">2.7.7.72</ecNumber>
        </recommendedName>
        <alternativeName>
            <fullName evidence="1">CCA tRNA nucleotidyltransferase</fullName>
        </alternativeName>
        <alternativeName>
            <fullName evidence="1">tRNA CCA-pyrophosphorylase</fullName>
        </alternativeName>
        <alternativeName>
            <fullName evidence="1">tRNA adenylyl-/cytidylyl-transferase</fullName>
        </alternativeName>
        <alternativeName>
            <fullName evidence="1">tRNA nucleotidyltransferase</fullName>
        </alternativeName>
        <alternativeName>
            <fullName evidence="1">tRNA-NT</fullName>
        </alternativeName>
    </domain>
    <domain>
        <recommendedName>
            <fullName evidence="1">2'-nucleotidase</fullName>
            <ecNumber evidence="1">3.1.3.-</ecNumber>
        </recommendedName>
    </domain>
    <domain>
        <recommendedName>
            <fullName evidence="1">2',3'-cyclic phosphodiesterase</fullName>
            <ecNumber evidence="1">3.1.4.-</ecNumber>
        </recommendedName>
    </domain>
    <domain>
        <recommendedName>
            <fullName evidence="1">Phosphatase</fullName>
            <ecNumber evidence="1">3.1.3.-</ecNumber>
        </recommendedName>
    </domain>
</protein>
<dbReference type="EC" id="2.7.7.72" evidence="1"/>
<dbReference type="EC" id="3.1.3.-" evidence="1"/>
<dbReference type="EC" id="3.1.4.-" evidence="1"/>
<dbReference type="EMBL" id="FM209186">
    <property type="protein sequence ID" value="CAW25308.1"/>
    <property type="molecule type" value="Genomic_DNA"/>
</dbReference>
<dbReference type="RefSeq" id="WP_012613529.1">
    <property type="nucleotide sequence ID" value="NC_011770.1"/>
</dbReference>
<dbReference type="SMR" id="B7V4H0"/>
<dbReference type="KEGG" id="pag:PLES_05811"/>
<dbReference type="HOGENOM" id="CLU_015961_1_1_6"/>
<dbReference type="GO" id="GO:0005524">
    <property type="term" value="F:ATP binding"/>
    <property type="evidence" value="ECO:0007669"/>
    <property type="project" value="UniProtKB-UniRule"/>
</dbReference>
<dbReference type="GO" id="GO:0004810">
    <property type="term" value="F:CCA tRNA nucleotidyltransferase activity"/>
    <property type="evidence" value="ECO:0007669"/>
    <property type="project" value="UniProtKB-UniRule"/>
</dbReference>
<dbReference type="GO" id="GO:0004112">
    <property type="term" value="F:cyclic-nucleotide phosphodiesterase activity"/>
    <property type="evidence" value="ECO:0007669"/>
    <property type="project" value="UniProtKB-UniRule"/>
</dbReference>
<dbReference type="GO" id="GO:0000287">
    <property type="term" value="F:magnesium ion binding"/>
    <property type="evidence" value="ECO:0007669"/>
    <property type="project" value="UniProtKB-UniRule"/>
</dbReference>
<dbReference type="GO" id="GO:0016791">
    <property type="term" value="F:phosphatase activity"/>
    <property type="evidence" value="ECO:0007669"/>
    <property type="project" value="UniProtKB-UniRule"/>
</dbReference>
<dbReference type="GO" id="GO:0000049">
    <property type="term" value="F:tRNA binding"/>
    <property type="evidence" value="ECO:0007669"/>
    <property type="project" value="UniProtKB-UniRule"/>
</dbReference>
<dbReference type="GO" id="GO:0042245">
    <property type="term" value="P:RNA repair"/>
    <property type="evidence" value="ECO:0007669"/>
    <property type="project" value="UniProtKB-KW"/>
</dbReference>
<dbReference type="GO" id="GO:0001680">
    <property type="term" value="P:tRNA 3'-terminal CCA addition"/>
    <property type="evidence" value="ECO:0007669"/>
    <property type="project" value="UniProtKB-UniRule"/>
</dbReference>
<dbReference type="CDD" id="cd00077">
    <property type="entry name" value="HDc"/>
    <property type="match status" value="1"/>
</dbReference>
<dbReference type="CDD" id="cd05398">
    <property type="entry name" value="NT_ClassII-CCAase"/>
    <property type="match status" value="1"/>
</dbReference>
<dbReference type="FunFam" id="1.10.3090.10:FF:000001">
    <property type="entry name" value="Multifunctional CCA protein"/>
    <property type="match status" value="1"/>
</dbReference>
<dbReference type="Gene3D" id="3.30.460.10">
    <property type="entry name" value="Beta Polymerase, domain 2"/>
    <property type="match status" value="1"/>
</dbReference>
<dbReference type="Gene3D" id="1.10.3090.10">
    <property type="entry name" value="cca-adding enzyme, domain 2"/>
    <property type="match status" value="1"/>
</dbReference>
<dbReference type="HAMAP" id="MF_01261">
    <property type="entry name" value="CCA_bact_type1"/>
    <property type="match status" value="1"/>
</dbReference>
<dbReference type="HAMAP" id="MF_01262">
    <property type="entry name" value="CCA_bact_type2"/>
    <property type="match status" value="1"/>
</dbReference>
<dbReference type="InterPro" id="IPR012006">
    <property type="entry name" value="CCA_bact"/>
</dbReference>
<dbReference type="InterPro" id="IPR003607">
    <property type="entry name" value="HD/PDEase_dom"/>
</dbReference>
<dbReference type="InterPro" id="IPR006674">
    <property type="entry name" value="HD_domain"/>
</dbReference>
<dbReference type="InterPro" id="IPR043519">
    <property type="entry name" value="NT_sf"/>
</dbReference>
<dbReference type="InterPro" id="IPR002646">
    <property type="entry name" value="PolA_pol_head_dom"/>
</dbReference>
<dbReference type="InterPro" id="IPR032828">
    <property type="entry name" value="PolyA_RNA-bd"/>
</dbReference>
<dbReference type="InterPro" id="IPR050124">
    <property type="entry name" value="tRNA_CCA-adding_enzyme"/>
</dbReference>
<dbReference type="NCBIfam" id="NF008137">
    <property type="entry name" value="PRK10885.1"/>
    <property type="match status" value="1"/>
</dbReference>
<dbReference type="PANTHER" id="PTHR47545">
    <property type="entry name" value="MULTIFUNCTIONAL CCA PROTEIN"/>
    <property type="match status" value="1"/>
</dbReference>
<dbReference type="PANTHER" id="PTHR47545:SF1">
    <property type="entry name" value="MULTIFUNCTIONAL CCA PROTEIN"/>
    <property type="match status" value="1"/>
</dbReference>
<dbReference type="Pfam" id="PF01966">
    <property type="entry name" value="HD"/>
    <property type="match status" value="1"/>
</dbReference>
<dbReference type="Pfam" id="PF01743">
    <property type="entry name" value="PolyA_pol"/>
    <property type="match status" value="1"/>
</dbReference>
<dbReference type="Pfam" id="PF12627">
    <property type="entry name" value="PolyA_pol_RNAbd"/>
    <property type="match status" value="1"/>
</dbReference>
<dbReference type="PIRSF" id="PIRSF000813">
    <property type="entry name" value="CCA_bact"/>
    <property type="match status" value="1"/>
</dbReference>
<dbReference type="SUPFAM" id="SSF81301">
    <property type="entry name" value="Nucleotidyltransferase"/>
    <property type="match status" value="1"/>
</dbReference>
<dbReference type="SUPFAM" id="SSF81891">
    <property type="entry name" value="Poly A polymerase C-terminal region-like"/>
    <property type="match status" value="1"/>
</dbReference>
<dbReference type="PROSITE" id="PS51831">
    <property type="entry name" value="HD"/>
    <property type="match status" value="1"/>
</dbReference>